<reference key="1">
    <citation type="submission" date="2008-02" db="EMBL/GenBank/DDBJ databases">
        <title>Complete sequence of Synechococcus sp. PCC 7002.</title>
        <authorList>
            <person name="Li T."/>
            <person name="Zhao J."/>
            <person name="Zhao C."/>
            <person name="Liu Z."/>
            <person name="Zhao F."/>
            <person name="Marquardt J."/>
            <person name="Nomura C.T."/>
            <person name="Persson S."/>
            <person name="Detter J.C."/>
            <person name="Richardson P.M."/>
            <person name="Lanz C."/>
            <person name="Schuster S.C."/>
            <person name="Wang J."/>
            <person name="Li S."/>
            <person name="Huang X."/>
            <person name="Cai T."/>
            <person name="Yu Z."/>
            <person name="Luo J."/>
            <person name="Zhao J."/>
            <person name="Bryant D.A."/>
        </authorList>
    </citation>
    <scope>NUCLEOTIDE SEQUENCE [LARGE SCALE GENOMIC DNA]</scope>
    <source>
        <strain>ATCC 27264 / PCC 7002 / PR-6</strain>
    </source>
</reference>
<dbReference type="EMBL" id="CP000951">
    <property type="protein sequence ID" value="ACA99032.1"/>
    <property type="molecule type" value="Genomic_DNA"/>
</dbReference>
<dbReference type="RefSeq" id="WP_012306656.1">
    <property type="nucleotide sequence ID" value="NZ_JAHHPU010000001.1"/>
</dbReference>
<dbReference type="SMR" id="B1XJH2"/>
<dbReference type="STRING" id="32049.SYNPCC7002_A1029"/>
<dbReference type="KEGG" id="syp:SYNPCC7002_A1029"/>
<dbReference type="eggNOG" id="COG0080">
    <property type="taxonomic scope" value="Bacteria"/>
</dbReference>
<dbReference type="HOGENOM" id="CLU_074237_2_2_3"/>
<dbReference type="Proteomes" id="UP000001688">
    <property type="component" value="Chromosome"/>
</dbReference>
<dbReference type="GO" id="GO:0022625">
    <property type="term" value="C:cytosolic large ribosomal subunit"/>
    <property type="evidence" value="ECO:0007669"/>
    <property type="project" value="TreeGrafter"/>
</dbReference>
<dbReference type="GO" id="GO:0070180">
    <property type="term" value="F:large ribosomal subunit rRNA binding"/>
    <property type="evidence" value="ECO:0007669"/>
    <property type="project" value="UniProtKB-UniRule"/>
</dbReference>
<dbReference type="GO" id="GO:0003735">
    <property type="term" value="F:structural constituent of ribosome"/>
    <property type="evidence" value="ECO:0007669"/>
    <property type="project" value="InterPro"/>
</dbReference>
<dbReference type="GO" id="GO:0006412">
    <property type="term" value="P:translation"/>
    <property type="evidence" value="ECO:0007669"/>
    <property type="project" value="UniProtKB-UniRule"/>
</dbReference>
<dbReference type="CDD" id="cd00349">
    <property type="entry name" value="Ribosomal_L11"/>
    <property type="match status" value="1"/>
</dbReference>
<dbReference type="FunFam" id="1.10.10.250:FF:000001">
    <property type="entry name" value="50S ribosomal protein L11"/>
    <property type="match status" value="1"/>
</dbReference>
<dbReference type="FunFam" id="3.30.1550.10:FF:000001">
    <property type="entry name" value="50S ribosomal protein L11"/>
    <property type="match status" value="1"/>
</dbReference>
<dbReference type="Gene3D" id="1.10.10.250">
    <property type="entry name" value="Ribosomal protein L11, C-terminal domain"/>
    <property type="match status" value="1"/>
</dbReference>
<dbReference type="Gene3D" id="3.30.1550.10">
    <property type="entry name" value="Ribosomal protein L11/L12, N-terminal domain"/>
    <property type="match status" value="1"/>
</dbReference>
<dbReference type="HAMAP" id="MF_00736">
    <property type="entry name" value="Ribosomal_uL11"/>
    <property type="match status" value="1"/>
</dbReference>
<dbReference type="InterPro" id="IPR000911">
    <property type="entry name" value="Ribosomal_uL11"/>
</dbReference>
<dbReference type="InterPro" id="IPR006519">
    <property type="entry name" value="Ribosomal_uL11_bac-typ"/>
</dbReference>
<dbReference type="InterPro" id="IPR020783">
    <property type="entry name" value="Ribosomal_uL11_C"/>
</dbReference>
<dbReference type="InterPro" id="IPR036769">
    <property type="entry name" value="Ribosomal_uL11_C_sf"/>
</dbReference>
<dbReference type="InterPro" id="IPR020785">
    <property type="entry name" value="Ribosomal_uL11_CS"/>
</dbReference>
<dbReference type="InterPro" id="IPR020784">
    <property type="entry name" value="Ribosomal_uL11_N"/>
</dbReference>
<dbReference type="InterPro" id="IPR036796">
    <property type="entry name" value="Ribosomal_uL11_N_sf"/>
</dbReference>
<dbReference type="NCBIfam" id="TIGR01632">
    <property type="entry name" value="L11_bact"/>
    <property type="match status" value="1"/>
</dbReference>
<dbReference type="PANTHER" id="PTHR11661">
    <property type="entry name" value="60S RIBOSOMAL PROTEIN L12"/>
    <property type="match status" value="1"/>
</dbReference>
<dbReference type="PANTHER" id="PTHR11661:SF1">
    <property type="entry name" value="LARGE RIBOSOMAL SUBUNIT PROTEIN UL11M"/>
    <property type="match status" value="1"/>
</dbReference>
<dbReference type="Pfam" id="PF00298">
    <property type="entry name" value="Ribosomal_L11"/>
    <property type="match status" value="1"/>
</dbReference>
<dbReference type="Pfam" id="PF03946">
    <property type="entry name" value="Ribosomal_L11_N"/>
    <property type="match status" value="1"/>
</dbReference>
<dbReference type="SMART" id="SM00649">
    <property type="entry name" value="RL11"/>
    <property type="match status" value="1"/>
</dbReference>
<dbReference type="SUPFAM" id="SSF54747">
    <property type="entry name" value="Ribosomal L11/L12e N-terminal domain"/>
    <property type="match status" value="1"/>
</dbReference>
<dbReference type="SUPFAM" id="SSF46906">
    <property type="entry name" value="Ribosomal protein L11, C-terminal domain"/>
    <property type="match status" value="1"/>
</dbReference>
<dbReference type="PROSITE" id="PS00359">
    <property type="entry name" value="RIBOSOMAL_L11"/>
    <property type="match status" value="1"/>
</dbReference>
<proteinExistence type="inferred from homology"/>
<organism>
    <name type="scientific">Picosynechococcus sp. (strain ATCC 27264 / PCC 7002 / PR-6)</name>
    <name type="common">Agmenellum quadruplicatum</name>
    <dbReference type="NCBI Taxonomy" id="32049"/>
    <lineage>
        <taxon>Bacteria</taxon>
        <taxon>Bacillati</taxon>
        <taxon>Cyanobacteriota</taxon>
        <taxon>Cyanophyceae</taxon>
        <taxon>Oscillatoriophycideae</taxon>
        <taxon>Chroococcales</taxon>
        <taxon>Geminocystaceae</taxon>
        <taxon>Picosynechococcus</taxon>
    </lineage>
</organism>
<accession>B1XJH2</accession>
<comment type="function">
    <text evidence="1">Forms part of the ribosomal stalk which helps the ribosome interact with GTP-bound translation factors.</text>
</comment>
<comment type="subunit">
    <text evidence="1">Part of the ribosomal stalk of the 50S ribosomal subunit. Interacts with L10 and the large rRNA to form the base of the stalk. L10 forms an elongated spine to which L12 dimers bind in a sequential fashion forming a multimeric L10(L12)X complex.</text>
</comment>
<comment type="PTM">
    <text evidence="1">One or more lysine residues are methylated.</text>
</comment>
<comment type="similarity">
    <text evidence="1">Belongs to the universal ribosomal protein uL11 family.</text>
</comment>
<keyword id="KW-0488">Methylation</keyword>
<keyword id="KW-1185">Reference proteome</keyword>
<keyword id="KW-0687">Ribonucleoprotein</keyword>
<keyword id="KW-0689">Ribosomal protein</keyword>
<keyword id="KW-0694">RNA-binding</keyword>
<keyword id="KW-0699">rRNA-binding</keyword>
<evidence type="ECO:0000255" key="1">
    <source>
        <dbReference type="HAMAP-Rule" id="MF_00736"/>
    </source>
</evidence>
<evidence type="ECO:0000305" key="2"/>
<name>RL11_PICP2</name>
<feature type="chain" id="PRO_1000195734" description="Large ribosomal subunit protein uL11">
    <location>
        <begin position="1"/>
        <end position="141"/>
    </location>
</feature>
<sequence>MAKKVVTVIKLALPAGKANPAPPVGPALGQHGVNIMAFCKEYNAKTSDQAGMIIPVEISVYEDRSFTFILKTPPASVLIRKAAGVEKGSAQPNKQKAGSISRAQLQEIAQTKMPDLNANDIEAAMNIVAGTARNMGITVTD</sequence>
<gene>
    <name evidence="1" type="primary">rplK</name>
    <name evidence="1" type="synonym">rpl11</name>
    <name type="ordered locus">SYNPCC7002_A1029</name>
</gene>
<protein>
    <recommendedName>
        <fullName evidence="1">Large ribosomal subunit protein uL11</fullName>
    </recommendedName>
    <alternativeName>
        <fullName evidence="2">50S ribosomal protein L11</fullName>
    </alternativeName>
</protein>